<gene>
    <name evidence="1" type="primary">queC</name>
    <name type="ordered locus">Smlt3700</name>
</gene>
<reference key="1">
    <citation type="journal article" date="2008" name="Genome Biol.">
        <title>The complete genome, comparative and functional analysis of Stenotrophomonas maltophilia reveals an organism heavily shielded by drug resistance determinants.</title>
        <authorList>
            <person name="Crossman L.C."/>
            <person name="Gould V.C."/>
            <person name="Dow J.M."/>
            <person name="Vernikos G.S."/>
            <person name="Okazaki A."/>
            <person name="Sebaihia M."/>
            <person name="Saunders D."/>
            <person name="Arrowsmith C."/>
            <person name="Carver T."/>
            <person name="Peters N."/>
            <person name="Adlem E."/>
            <person name="Kerhornou A."/>
            <person name="Lord A."/>
            <person name="Murphy L."/>
            <person name="Seeger K."/>
            <person name="Squares R."/>
            <person name="Rutter S."/>
            <person name="Quail M.A."/>
            <person name="Rajandream M.A."/>
            <person name="Harris D."/>
            <person name="Churcher C."/>
            <person name="Bentley S.D."/>
            <person name="Parkhill J."/>
            <person name="Thomson N.R."/>
            <person name="Avison M.B."/>
        </authorList>
    </citation>
    <scope>NUCLEOTIDE SEQUENCE [LARGE SCALE GENOMIC DNA]</scope>
    <source>
        <strain>K279a</strain>
    </source>
</reference>
<name>QUEC_STRMK</name>
<evidence type="ECO:0000255" key="1">
    <source>
        <dbReference type="HAMAP-Rule" id="MF_01633"/>
    </source>
</evidence>
<protein>
    <recommendedName>
        <fullName evidence="1">7-cyano-7-deazaguanine synthase</fullName>
        <ecNumber evidence="1">6.3.4.20</ecNumber>
    </recommendedName>
    <alternativeName>
        <fullName evidence="1">7-cyano-7-carbaguanine synthase</fullName>
    </alternativeName>
    <alternativeName>
        <fullName evidence="1">PreQ(0) synthase</fullName>
    </alternativeName>
    <alternativeName>
        <fullName evidence="1">Queuosine biosynthesis protein QueC</fullName>
    </alternativeName>
</protein>
<sequence>MKKAVVLLSGGMDSAAVIAMAQEQGFAVHALSVRYGQRHTSELDAAARVAKAQGVVAHKIVDVDLRSIGGSALTDDIDVPEAGGAGIPVTYVPARNTIMLSLALGWAEVLGANDIFCGVNAVDYSGYPDCRPEFVAAFQALANLATKSGVEGAGIKVHAPLQFLSKGQIVSEGVRLGVDFGLTVSCYNADANGAACGHCDACRLRAQGFAEAGVPDPTLYA</sequence>
<organism>
    <name type="scientific">Stenotrophomonas maltophilia (strain K279a)</name>
    <dbReference type="NCBI Taxonomy" id="522373"/>
    <lineage>
        <taxon>Bacteria</taxon>
        <taxon>Pseudomonadati</taxon>
        <taxon>Pseudomonadota</taxon>
        <taxon>Gammaproteobacteria</taxon>
        <taxon>Lysobacterales</taxon>
        <taxon>Lysobacteraceae</taxon>
        <taxon>Stenotrophomonas</taxon>
        <taxon>Stenotrophomonas maltophilia group</taxon>
    </lineage>
</organism>
<keyword id="KW-0067">ATP-binding</keyword>
<keyword id="KW-0436">Ligase</keyword>
<keyword id="KW-0479">Metal-binding</keyword>
<keyword id="KW-0547">Nucleotide-binding</keyword>
<keyword id="KW-0671">Queuosine biosynthesis</keyword>
<keyword id="KW-1185">Reference proteome</keyword>
<keyword id="KW-0862">Zinc</keyword>
<feature type="chain" id="PRO_1000186640" description="7-cyano-7-deazaguanine synthase">
    <location>
        <begin position="1"/>
        <end position="221"/>
    </location>
</feature>
<feature type="binding site" evidence="1">
    <location>
        <begin position="8"/>
        <end position="18"/>
    </location>
    <ligand>
        <name>ATP</name>
        <dbReference type="ChEBI" id="CHEBI:30616"/>
    </ligand>
</feature>
<feature type="binding site" evidence="1">
    <location>
        <position position="186"/>
    </location>
    <ligand>
        <name>Zn(2+)</name>
        <dbReference type="ChEBI" id="CHEBI:29105"/>
    </ligand>
</feature>
<feature type="binding site" evidence="1">
    <location>
        <position position="196"/>
    </location>
    <ligand>
        <name>Zn(2+)</name>
        <dbReference type="ChEBI" id="CHEBI:29105"/>
    </ligand>
</feature>
<feature type="binding site" evidence="1">
    <location>
        <position position="199"/>
    </location>
    <ligand>
        <name>Zn(2+)</name>
        <dbReference type="ChEBI" id="CHEBI:29105"/>
    </ligand>
</feature>
<feature type="binding site" evidence="1">
    <location>
        <position position="202"/>
    </location>
    <ligand>
        <name>Zn(2+)</name>
        <dbReference type="ChEBI" id="CHEBI:29105"/>
    </ligand>
</feature>
<accession>B2FRM5</accession>
<proteinExistence type="inferred from homology"/>
<dbReference type="EC" id="6.3.4.20" evidence="1"/>
<dbReference type="EMBL" id="AM743169">
    <property type="protein sequence ID" value="CAQ47115.1"/>
    <property type="molecule type" value="Genomic_DNA"/>
</dbReference>
<dbReference type="RefSeq" id="WP_012481067.1">
    <property type="nucleotide sequence ID" value="NC_010943.1"/>
</dbReference>
<dbReference type="SMR" id="B2FRM5"/>
<dbReference type="EnsemblBacteria" id="CAQ47115">
    <property type="protein sequence ID" value="CAQ47115"/>
    <property type="gene ID" value="Smlt3700"/>
</dbReference>
<dbReference type="KEGG" id="sml:Smlt3700"/>
<dbReference type="eggNOG" id="COG0603">
    <property type="taxonomic scope" value="Bacteria"/>
</dbReference>
<dbReference type="HOGENOM" id="CLU_081854_1_1_6"/>
<dbReference type="UniPathway" id="UPA00391"/>
<dbReference type="Proteomes" id="UP000008840">
    <property type="component" value="Chromosome"/>
</dbReference>
<dbReference type="GO" id="GO:0005524">
    <property type="term" value="F:ATP binding"/>
    <property type="evidence" value="ECO:0007669"/>
    <property type="project" value="UniProtKB-UniRule"/>
</dbReference>
<dbReference type="GO" id="GO:0016879">
    <property type="term" value="F:ligase activity, forming carbon-nitrogen bonds"/>
    <property type="evidence" value="ECO:0007669"/>
    <property type="project" value="UniProtKB-UniRule"/>
</dbReference>
<dbReference type="GO" id="GO:0008270">
    <property type="term" value="F:zinc ion binding"/>
    <property type="evidence" value="ECO:0007669"/>
    <property type="project" value="UniProtKB-UniRule"/>
</dbReference>
<dbReference type="GO" id="GO:0008616">
    <property type="term" value="P:queuosine biosynthetic process"/>
    <property type="evidence" value="ECO:0007669"/>
    <property type="project" value="UniProtKB-UniRule"/>
</dbReference>
<dbReference type="CDD" id="cd01995">
    <property type="entry name" value="QueC-like"/>
    <property type="match status" value="1"/>
</dbReference>
<dbReference type="FunFam" id="3.40.50.620:FF:000131">
    <property type="entry name" value="7-cyano-7-deazaguanine synthase"/>
    <property type="match status" value="1"/>
</dbReference>
<dbReference type="Gene3D" id="3.40.50.620">
    <property type="entry name" value="HUPs"/>
    <property type="match status" value="1"/>
</dbReference>
<dbReference type="HAMAP" id="MF_01633">
    <property type="entry name" value="QueC"/>
    <property type="match status" value="1"/>
</dbReference>
<dbReference type="InterPro" id="IPR018317">
    <property type="entry name" value="QueC"/>
</dbReference>
<dbReference type="InterPro" id="IPR014729">
    <property type="entry name" value="Rossmann-like_a/b/a_fold"/>
</dbReference>
<dbReference type="NCBIfam" id="TIGR00364">
    <property type="entry name" value="7-cyano-7-deazaguanine synthase QueC"/>
    <property type="match status" value="1"/>
</dbReference>
<dbReference type="PANTHER" id="PTHR42914">
    <property type="entry name" value="7-CYANO-7-DEAZAGUANINE SYNTHASE"/>
    <property type="match status" value="1"/>
</dbReference>
<dbReference type="PANTHER" id="PTHR42914:SF1">
    <property type="entry name" value="7-CYANO-7-DEAZAGUANINE SYNTHASE"/>
    <property type="match status" value="1"/>
</dbReference>
<dbReference type="Pfam" id="PF06508">
    <property type="entry name" value="QueC"/>
    <property type="match status" value="1"/>
</dbReference>
<dbReference type="PIRSF" id="PIRSF006293">
    <property type="entry name" value="ExsB"/>
    <property type="match status" value="1"/>
</dbReference>
<dbReference type="SUPFAM" id="SSF52402">
    <property type="entry name" value="Adenine nucleotide alpha hydrolases-like"/>
    <property type="match status" value="1"/>
</dbReference>
<comment type="function">
    <text evidence="1">Catalyzes the ATP-dependent conversion of 7-carboxy-7-deazaguanine (CDG) to 7-cyano-7-deazaguanine (preQ(0)).</text>
</comment>
<comment type="catalytic activity">
    <reaction evidence="1">
        <text>7-carboxy-7-deazaguanine + NH4(+) + ATP = 7-cyano-7-deazaguanine + ADP + phosphate + H2O + H(+)</text>
        <dbReference type="Rhea" id="RHEA:27982"/>
        <dbReference type="ChEBI" id="CHEBI:15377"/>
        <dbReference type="ChEBI" id="CHEBI:15378"/>
        <dbReference type="ChEBI" id="CHEBI:28938"/>
        <dbReference type="ChEBI" id="CHEBI:30616"/>
        <dbReference type="ChEBI" id="CHEBI:43474"/>
        <dbReference type="ChEBI" id="CHEBI:45075"/>
        <dbReference type="ChEBI" id="CHEBI:61036"/>
        <dbReference type="ChEBI" id="CHEBI:456216"/>
        <dbReference type="EC" id="6.3.4.20"/>
    </reaction>
</comment>
<comment type="cofactor">
    <cofactor evidence="1">
        <name>Zn(2+)</name>
        <dbReference type="ChEBI" id="CHEBI:29105"/>
    </cofactor>
    <text evidence="1">Binds 1 zinc ion per subunit.</text>
</comment>
<comment type="pathway">
    <text evidence="1">Purine metabolism; 7-cyano-7-deazaguanine biosynthesis.</text>
</comment>
<comment type="similarity">
    <text evidence="1">Belongs to the QueC family.</text>
</comment>